<accession>A1ASL7</accession>
<keyword id="KW-0963">Cytoplasm</keyword>
<keyword id="KW-0378">Hydrolase</keyword>
<keyword id="KW-0479">Metal-binding</keyword>
<keyword id="KW-0547">Nucleotide-binding</keyword>
<keyword id="KW-1185">Reference proteome</keyword>
<feature type="chain" id="PRO_1000007758" description="5'-nucleotidase SurE">
    <location>
        <begin position="1"/>
        <end position="247"/>
    </location>
</feature>
<feature type="binding site" evidence="1">
    <location>
        <position position="8"/>
    </location>
    <ligand>
        <name>a divalent metal cation</name>
        <dbReference type="ChEBI" id="CHEBI:60240"/>
    </ligand>
</feature>
<feature type="binding site" evidence="1">
    <location>
        <position position="9"/>
    </location>
    <ligand>
        <name>a divalent metal cation</name>
        <dbReference type="ChEBI" id="CHEBI:60240"/>
    </ligand>
</feature>
<feature type="binding site" evidence="1">
    <location>
        <position position="39"/>
    </location>
    <ligand>
        <name>a divalent metal cation</name>
        <dbReference type="ChEBI" id="CHEBI:60240"/>
    </ligand>
</feature>
<feature type="binding site" evidence="1">
    <location>
        <position position="91"/>
    </location>
    <ligand>
        <name>a divalent metal cation</name>
        <dbReference type="ChEBI" id="CHEBI:60240"/>
    </ligand>
</feature>
<comment type="function">
    <text evidence="1">Nucleotidase that shows phosphatase activity on nucleoside 5'-monophosphates.</text>
</comment>
<comment type="catalytic activity">
    <reaction evidence="1">
        <text>a ribonucleoside 5'-phosphate + H2O = a ribonucleoside + phosphate</text>
        <dbReference type="Rhea" id="RHEA:12484"/>
        <dbReference type="ChEBI" id="CHEBI:15377"/>
        <dbReference type="ChEBI" id="CHEBI:18254"/>
        <dbReference type="ChEBI" id="CHEBI:43474"/>
        <dbReference type="ChEBI" id="CHEBI:58043"/>
        <dbReference type="EC" id="3.1.3.5"/>
    </reaction>
</comment>
<comment type="cofactor">
    <cofactor evidence="1">
        <name>a divalent metal cation</name>
        <dbReference type="ChEBI" id="CHEBI:60240"/>
    </cofactor>
    <text evidence="1">Binds 1 divalent metal cation per subunit.</text>
</comment>
<comment type="subcellular location">
    <subcellularLocation>
        <location evidence="1">Cytoplasm</location>
    </subcellularLocation>
</comment>
<comment type="similarity">
    <text evidence="1">Belongs to the SurE nucleotidase family.</text>
</comment>
<sequence length="247" mass="26759">MHIMVTNDDGIQAPGIQALASALRVLGEVTVVAPDRERSAVGHALTLNSPLRVFELRDGFYAVDGTPTDCVNMGIHSLLPFRPDLIVSGINHGANLGDDVTYSGTVAAAIEATLMGIPAIAVSLATQERSGHFPEAAQIAVRVARQVLSNGLPEDTFLNVNVPDCPAEEIRPPLVTRQGKRSFVGNVIDKTDPRGRKYYWIGSGEADFNDYEGTDFHAINRKHVSITPLHLDLTNYASMKVITTWVF</sequence>
<proteinExistence type="inferred from homology"/>
<reference key="1">
    <citation type="submission" date="2006-10" db="EMBL/GenBank/DDBJ databases">
        <title>Complete sequence of chromosome of Pelobacter propionicus DSM 2379.</title>
        <authorList>
            <consortium name="US DOE Joint Genome Institute"/>
            <person name="Copeland A."/>
            <person name="Lucas S."/>
            <person name="Lapidus A."/>
            <person name="Barry K."/>
            <person name="Detter J.C."/>
            <person name="Glavina del Rio T."/>
            <person name="Hammon N."/>
            <person name="Israni S."/>
            <person name="Dalin E."/>
            <person name="Tice H."/>
            <person name="Pitluck S."/>
            <person name="Saunders E."/>
            <person name="Brettin T."/>
            <person name="Bruce D."/>
            <person name="Han C."/>
            <person name="Tapia R."/>
            <person name="Schmutz J."/>
            <person name="Larimer F."/>
            <person name="Land M."/>
            <person name="Hauser L."/>
            <person name="Kyrpides N."/>
            <person name="Kim E."/>
            <person name="Lovley D."/>
            <person name="Richardson P."/>
        </authorList>
    </citation>
    <scope>NUCLEOTIDE SEQUENCE [LARGE SCALE GENOMIC DNA]</scope>
    <source>
        <strain>DSM 2379 / NBRC 103807 / OttBd1</strain>
    </source>
</reference>
<protein>
    <recommendedName>
        <fullName evidence="1">5'-nucleotidase SurE</fullName>
        <ecNumber evidence="1">3.1.3.5</ecNumber>
    </recommendedName>
    <alternativeName>
        <fullName evidence="1">Nucleoside 5'-monophosphate phosphohydrolase</fullName>
    </alternativeName>
</protein>
<name>SURE_PELPD</name>
<evidence type="ECO:0000255" key="1">
    <source>
        <dbReference type="HAMAP-Rule" id="MF_00060"/>
    </source>
</evidence>
<organism>
    <name type="scientific">Pelobacter propionicus (strain DSM 2379 / NBRC 103807 / OttBd1)</name>
    <dbReference type="NCBI Taxonomy" id="338966"/>
    <lineage>
        <taxon>Bacteria</taxon>
        <taxon>Pseudomonadati</taxon>
        <taxon>Thermodesulfobacteriota</taxon>
        <taxon>Desulfuromonadia</taxon>
        <taxon>Desulfuromonadales</taxon>
        <taxon>Desulfuromonadaceae</taxon>
        <taxon>Pelobacter</taxon>
    </lineage>
</organism>
<gene>
    <name evidence="1" type="primary">surE</name>
    <name type="ordered locus">Ppro_2737</name>
</gene>
<dbReference type="EC" id="3.1.3.5" evidence="1"/>
<dbReference type="EMBL" id="CP000482">
    <property type="protein sequence ID" value="ABL00338.1"/>
    <property type="molecule type" value="Genomic_DNA"/>
</dbReference>
<dbReference type="RefSeq" id="WP_011736588.1">
    <property type="nucleotide sequence ID" value="NC_008609.1"/>
</dbReference>
<dbReference type="SMR" id="A1ASL7"/>
<dbReference type="STRING" id="338966.Ppro_2737"/>
<dbReference type="KEGG" id="ppd:Ppro_2737"/>
<dbReference type="eggNOG" id="COG0496">
    <property type="taxonomic scope" value="Bacteria"/>
</dbReference>
<dbReference type="HOGENOM" id="CLU_045192_1_2_7"/>
<dbReference type="OrthoDB" id="9780815at2"/>
<dbReference type="Proteomes" id="UP000006732">
    <property type="component" value="Chromosome"/>
</dbReference>
<dbReference type="GO" id="GO:0005737">
    <property type="term" value="C:cytoplasm"/>
    <property type="evidence" value="ECO:0007669"/>
    <property type="project" value="UniProtKB-SubCell"/>
</dbReference>
<dbReference type="GO" id="GO:0008254">
    <property type="term" value="F:3'-nucleotidase activity"/>
    <property type="evidence" value="ECO:0007669"/>
    <property type="project" value="TreeGrafter"/>
</dbReference>
<dbReference type="GO" id="GO:0008253">
    <property type="term" value="F:5'-nucleotidase activity"/>
    <property type="evidence" value="ECO:0007669"/>
    <property type="project" value="UniProtKB-UniRule"/>
</dbReference>
<dbReference type="GO" id="GO:0004309">
    <property type="term" value="F:exopolyphosphatase activity"/>
    <property type="evidence" value="ECO:0007669"/>
    <property type="project" value="TreeGrafter"/>
</dbReference>
<dbReference type="GO" id="GO:0046872">
    <property type="term" value="F:metal ion binding"/>
    <property type="evidence" value="ECO:0007669"/>
    <property type="project" value="UniProtKB-UniRule"/>
</dbReference>
<dbReference type="GO" id="GO:0000166">
    <property type="term" value="F:nucleotide binding"/>
    <property type="evidence" value="ECO:0007669"/>
    <property type="project" value="UniProtKB-KW"/>
</dbReference>
<dbReference type="FunFam" id="3.40.1210.10:FF:000001">
    <property type="entry name" value="5'/3'-nucleotidase SurE"/>
    <property type="match status" value="1"/>
</dbReference>
<dbReference type="Gene3D" id="3.40.1210.10">
    <property type="entry name" value="Survival protein SurE-like phosphatase/nucleotidase"/>
    <property type="match status" value="1"/>
</dbReference>
<dbReference type="HAMAP" id="MF_00060">
    <property type="entry name" value="SurE"/>
    <property type="match status" value="1"/>
</dbReference>
<dbReference type="InterPro" id="IPR030048">
    <property type="entry name" value="SurE"/>
</dbReference>
<dbReference type="InterPro" id="IPR002828">
    <property type="entry name" value="SurE-like_Pase/nucleotidase"/>
</dbReference>
<dbReference type="InterPro" id="IPR036523">
    <property type="entry name" value="SurE-like_sf"/>
</dbReference>
<dbReference type="NCBIfam" id="NF001489">
    <property type="entry name" value="PRK00346.1-3"/>
    <property type="match status" value="1"/>
</dbReference>
<dbReference type="NCBIfam" id="NF001490">
    <property type="entry name" value="PRK00346.1-4"/>
    <property type="match status" value="1"/>
</dbReference>
<dbReference type="NCBIfam" id="NF001492">
    <property type="entry name" value="PRK00346.2-2"/>
    <property type="match status" value="1"/>
</dbReference>
<dbReference type="NCBIfam" id="TIGR00087">
    <property type="entry name" value="surE"/>
    <property type="match status" value="1"/>
</dbReference>
<dbReference type="PANTHER" id="PTHR30457">
    <property type="entry name" value="5'-NUCLEOTIDASE SURE"/>
    <property type="match status" value="1"/>
</dbReference>
<dbReference type="PANTHER" id="PTHR30457:SF12">
    <property type="entry name" value="5'_3'-NUCLEOTIDASE SURE"/>
    <property type="match status" value="1"/>
</dbReference>
<dbReference type="Pfam" id="PF01975">
    <property type="entry name" value="SurE"/>
    <property type="match status" value="1"/>
</dbReference>
<dbReference type="SUPFAM" id="SSF64167">
    <property type="entry name" value="SurE-like"/>
    <property type="match status" value="1"/>
</dbReference>